<evidence type="ECO:0000255" key="1">
    <source>
        <dbReference type="HAMAP-Rule" id="MF_01631"/>
    </source>
</evidence>
<sequence>MNKYVVILAAGKGTRMKSQLYKVLHKVCGKTMVEHVVNAAKGTNPDKIITVVGNGADSVKDVLAGQSDFAFQEQQLGTGDAVLAASDLLENLDGSTLVATGDTPLFTAETFNNLFKKHEESGNSATVLTAKAPNPFGYGRIIRDEDGNVLRIVEQKDGTPEELAVDEINTGVFCFDNKELFKALKQVGNDNAQGEYYLTDVLEIMRKAGHKVGAYEMPDFSESLGVNDRIALAQATKIMQRRINEEHMKNGVSFIDPDTAYIDSDVKIGNDTVIEGNVVIKGNTEIGSDCYITNSSRIVDSKIGNHVTITSSTLQEAQMDDNTDIGPNSHLRPKAVIRKGAHIGNFVEIKKAEIGENSKVGHLTYVGDATLGKDINIGCGTIFSNYDGVKKFHTNVGDHSFIGAGATIIAPVNIADHSFVAADSTITKDVARYDMAIARGRQTNKPDYWHKLPLSKDKEWE</sequence>
<feature type="chain" id="PRO_1000056168" description="Bifunctional protein GlmU">
    <location>
        <begin position="1"/>
        <end position="461"/>
    </location>
</feature>
<feature type="region of interest" description="Pyrophosphorylase" evidence="1">
    <location>
        <begin position="1"/>
        <end position="229"/>
    </location>
</feature>
<feature type="region of interest" description="Linker" evidence="1">
    <location>
        <begin position="230"/>
        <end position="250"/>
    </location>
</feature>
<feature type="region of interest" description="N-acetyltransferase" evidence="1">
    <location>
        <begin position="251"/>
        <end position="461"/>
    </location>
</feature>
<feature type="active site" description="Proton acceptor" evidence="1">
    <location>
        <position position="362"/>
    </location>
</feature>
<feature type="binding site" evidence="1">
    <location>
        <begin position="8"/>
        <end position="11"/>
    </location>
    <ligand>
        <name>UDP-N-acetyl-alpha-D-glucosamine</name>
        <dbReference type="ChEBI" id="CHEBI:57705"/>
    </ligand>
</feature>
<feature type="binding site" evidence="1">
    <location>
        <position position="22"/>
    </location>
    <ligand>
        <name>UDP-N-acetyl-alpha-D-glucosamine</name>
        <dbReference type="ChEBI" id="CHEBI:57705"/>
    </ligand>
</feature>
<feature type="binding site" evidence="1">
    <location>
        <position position="72"/>
    </location>
    <ligand>
        <name>UDP-N-acetyl-alpha-D-glucosamine</name>
        <dbReference type="ChEBI" id="CHEBI:57705"/>
    </ligand>
</feature>
<feature type="binding site" evidence="1">
    <location>
        <begin position="77"/>
        <end position="78"/>
    </location>
    <ligand>
        <name>UDP-N-acetyl-alpha-D-glucosamine</name>
        <dbReference type="ChEBI" id="CHEBI:57705"/>
    </ligand>
</feature>
<feature type="binding site" evidence="1">
    <location>
        <position position="102"/>
    </location>
    <ligand>
        <name>Mg(2+)</name>
        <dbReference type="ChEBI" id="CHEBI:18420"/>
    </ligand>
</feature>
<feature type="binding site" evidence="1">
    <location>
        <position position="139"/>
    </location>
    <ligand>
        <name>UDP-N-acetyl-alpha-D-glucosamine</name>
        <dbReference type="ChEBI" id="CHEBI:57705"/>
    </ligand>
</feature>
<feature type="binding site" evidence="1">
    <location>
        <position position="154"/>
    </location>
    <ligand>
        <name>UDP-N-acetyl-alpha-D-glucosamine</name>
        <dbReference type="ChEBI" id="CHEBI:57705"/>
    </ligand>
</feature>
<feature type="binding site" evidence="1">
    <location>
        <position position="169"/>
    </location>
    <ligand>
        <name>UDP-N-acetyl-alpha-D-glucosamine</name>
        <dbReference type="ChEBI" id="CHEBI:57705"/>
    </ligand>
</feature>
<feature type="binding site" evidence="1">
    <location>
        <position position="227"/>
    </location>
    <ligand>
        <name>Mg(2+)</name>
        <dbReference type="ChEBI" id="CHEBI:18420"/>
    </ligand>
</feature>
<feature type="binding site" evidence="1">
    <location>
        <position position="227"/>
    </location>
    <ligand>
        <name>UDP-N-acetyl-alpha-D-glucosamine</name>
        <dbReference type="ChEBI" id="CHEBI:57705"/>
    </ligand>
</feature>
<feature type="binding site" evidence="1">
    <location>
        <position position="332"/>
    </location>
    <ligand>
        <name>UDP-N-acetyl-alpha-D-glucosamine</name>
        <dbReference type="ChEBI" id="CHEBI:57705"/>
    </ligand>
</feature>
<feature type="binding site" evidence="1">
    <location>
        <position position="350"/>
    </location>
    <ligand>
        <name>UDP-N-acetyl-alpha-D-glucosamine</name>
        <dbReference type="ChEBI" id="CHEBI:57705"/>
    </ligand>
</feature>
<feature type="binding site" evidence="1">
    <location>
        <position position="365"/>
    </location>
    <ligand>
        <name>UDP-N-acetyl-alpha-D-glucosamine</name>
        <dbReference type="ChEBI" id="CHEBI:57705"/>
    </ligand>
</feature>
<feature type="binding site" evidence="1">
    <location>
        <position position="376"/>
    </location>
    <ligand>
        <name>UDP-N-acetyl-alpha-D-glucosamine</name>
        <dbReference type="ChEBI" id="CHEBI:57705"/>
    </ligand>
</feature>
<feature type="binding site" evidence="1">
    <location>
        <begin position="385"/>
        <end position="386"/>
    </location>
    <ligand>
        <name>acetyl-CoA</name>
        <dbReference type="ChEBI" id="CHEBI:57288"/>
    </ligand>
</feature>
<feature type="binding site" evidence="1">
    <location>
        <position position="422"/>
    </location>
    <ligand>
        <name>acetyl-CoA</name>
        <dbReference type="ChEBI" id="CHEBI:57288"/>
    </ligand>
</feature>
<feature type="binding site" evidence="1">
    <location>
        <position position="439"/>
    </location>
    <ligand>
        <name>acetyl-CoA</name>
        <dbReference type="ChEBI" id="CHEBI:57288"/>
    </ligand>
</feature>
<gene>
    <name evidence="1" type="primary">glmU</name>
    <name type="ordered locus">LGAS_0211</name>
</gene>
<keyword id="KW-0012">Acyltransferase</keyword>
<keyword id="KW-0133">Cell shape</keyword>
<keyword id="KW-0961">Cell wall biogenesis/degradation</keyword>
<keyword id="KW-0963">Cytoplasm</keyword>
<keyword id="KW-0460">Magnesium</keyword>
<keyword id="KW-0479">Metal-binding</keyword>
<keyword id="KW-0511">Multifunctional enzyme</keyword>
<keyword id="KW-0548">Nucleotidyltransferase</keyword>
<keyword id="KW-0573">Peptidoglycan synthesis</keyword>
<keyword id="KW-0677">Repeat</keyword>
<keyword id="KW-0808">Transferase</keyword>
<name>GLMU_LACGA</name>
<reference key="1">
    <citation type="journal article" date="2006" name="Proc. Natl. Acad. Sci. U.S.A.">
        <title>Comparative genomics of the lactic acid bacteria.</title>
        <authorList>
            <person name="Makarova K.S."/>
            <person name="Slesarev A."/>
            <person name="Wolf Y.I."/>
            <person name="Sorokin A."/>
            <person name="Mirkin B."/>
            <person name="Koonin E.V."/>
            <person name="Pavlov A."/>
            <person name="Pavlova N."/>
            <person name="Karamychev V."/>
            <person name="Polouchine N."/>
            <person name="Shakhova V."/>
            <person name="Grigoriev I."/>
            <person name="Lou Y."/>
            <person name="Rohksar D."/>
            <person name="Lucas S."/>
            <person name="Huang K."/>
            <person name="Goodstein D.M."/>
            <person name="Hawkins T."/>
            <person name="Plengvidhya V."/>
            <person name="Welker D."/>
            <person name="Hughes J."/>
            <person name="Goh Y."/>
            <person name="Benson A."/>
            <person name="Baldwin K."/>
            <person name="Lee J.-H."/>
            <person name="Diaz-Muniz I."/>
            <person name="Dosti B."/>
            <person name="Smeianov V."/>
            <person name="Wechter W."/>
            <person name="Barabote R."/>
            <person name="Lorca G."/>
            <person name="Altermann E."/>
            <person name="Barrangou R."/>
            <person name="Ganesan B."/>
            <person name="Xie Y."/>
            <person name="Rawsthorne H."/>
            <person name="Tamir D."/>
            <person name="Parker C."/>
            <person name="Breidt F."/>
            <person name="Broadbent J.R."/>
            <person name="Hutkins R."/>
            <person name="O'Sullivan D."/>
            <person name="Steele J."/>
            <person name="Unlu G."/>
            <person name="Saier M.H. Jr."/>
            <person name="Klaenhammer T."/>
            <person name="Richardson P."/>
            <person name="Kozyavkin S."/>
            <person name="Weimer B.C."/>
            <person name="Mills D.A."/>
        </authorList>
    </citation>
    <scope>NUCLEOTIDE SEQUENCE [LARGE SCALE GENOMIC DNA]</scope>
    <source>
        <strain>ATCC 33323 / DSM 20243 / BCRC 14619 / CIP 102991 / JCM 1131 / KCTC 3163 / NCIMB 11718 / NCTC 13722 / AM63</strain>
    </source>
</reference>
<proteinExistence type="inferred from homology"/>
<protein>
    <recommendedName>
        <fullName evidence="1">Bifunctional protein GlmU</fullName>
    </recommendedName>
    <domain>
        <recommendedName>
            <fullName evidence="1">UDP-N-acetylglucosamine pyrophosphorylase</fullName>
            <ecNumber evidence="1">2.7.7.23</ecNumber>
        </recommendedName>
        <alternativeName>
            <fullName evidence="1">N-acetylglucosamine-1-phosphate uridyltransferase</fullName>
        </alternativeName>
    </domain>
    <domain>
        <recommendedName>
            <fullName evidence="1">Glucosamine-1-phosphate N-acetyltransferase</fullName>
            <ecNumber evidence="1">2.3.1.157</ecNumber>
        </recommendedName>
    </domain>
</protein>
<dbReference type="EC" id="2.7.7.23" evidence="1"/>
<dbReference type="EC" id="2.3.1.157" evidence="1"/>
<dbReference type="EMBL" id="CP000413">
    <property type="protein sequence ID" value="ABJ59620.1"/>
    <property type="molecule type" value="Genomic_DNA"/>
</dbReference>
<dbReference type="RefSeq" id="WP_003647896.1">
    <property type="nucleotide sequence ID" value="NZ_WBMG01000001.1"/>
</dbReference>
<dbReference type="SMR" id="Q046K2"/>
<dbReference type="GeneID" id="29640023"/>
<dbReference type="KEGG" id="lga:LGAS_0211"/>
<dbReference type="HOGENOM" id="CLU_029499_15_2_9"/>
<dbReference type="BioCyc" id="LGAS324831:G1G6Y-208-MONOMER"/>
<dbReference type="UniPathway" id="UPA00113">
    <property type="reaction ID" value="UER00532"/>
</dbReference>
<dbReference type="UniPathway" id="UPA00113">
    <property type="reaction ID" value="UER00533"/>
</dbReference>
<dbReference type="UniPathway" id="UPA00973"/>
<dbReference type="Proteomes" id="UP000000664">
    <property type="component" value="Chromosome"/>
</dbReference>
<dbReference type="GO" id="GO:0005737">
    <property type="term" value="C:cytoplasm"/>
    <property type="evidence" value="ECO:0007669"/>
    <property type="project" value="UniProtKB-SubCell"/>
</dbReference>
<dbReference type="GO" id="GO:0016020">
    <property type="term" value="C:membrane"/>
    <property type="evidence" value="ECO:0007669"/>
    <property type="project" value="GOC"/>
</dbReference>
<dbReference type="GO" id="GO:0019134">
    <property type="term" value="F:glucosamine-1-phosphate N-acetyltransferase activity"/>
    <property type="evidence" value="ECO:0007669"/>
    <property type="project" value="UniProtKB-UniRule"/>
</dbReference>
<dbReference type="GO" id="GO:0000287">
    <property type="term" value="F:magnesium ion binding"/>
    <property type="evidence" value="ECO:0007669"/>
    <property type="project" value="UniProtKB-UniRule"/>
</dbReference>
<dbReference type="GO" id="GO:0003977">
    <property type="term" value="F:UDP-N-acetylglucosamine diphosphorylase activity"/>
    <property type="evidence" value="ECO:0007669"/>
    <property type="project" value="UniProtKB-UniRule"/>
</dbReference>
<dbReference type="GO" id="GO:0000902">
    <property type="term" value="P:cell morphogenesis"/>
    <property type="evidence" value="ECO:0007669"/>
    <property type="project" value="UniProtKB-UniRule"/>
</dbReference>
<dbReference type="GO" id="GO:0071555">
    <property type="term" value="P:cell wall organization"/>
    <property type="evidence" value="ECO:0007669"/>
    <property type="project" value="UniProtKB-KW"/>
</dbReference>
<dbReference type="GO" id="GO:0009245">
    <property type="term" value="P:lipid A biosynthetic process"/>
    <property type="evidence" value="ECO:0007669"/>
    <property type="project" value="UniProtKB-UniRule"/>
</dbReference>
<dbReference type="GO" id="GO:0009252">
    <property type="term" value="P:peptidoglycan biosynthetic process"/>
    <property type="evidence" value="ECO:0007669"/>
    <property type="project" value="UniProtKB-UniRule"/>
</dbReference>
<dbReference type="GO" id="GO:0008360">
    <property type="term" value="P:regulation of cell shape"/>
    <property type="evidence" value="ECO:0007669"/>
    <property type="project" value="UniProtKB-KW"/>
</dbReference>
<dbReference type="GO" id="GO:0006048">
    <property type="term" value="P:UDP-N-acetylglucosamine biosynthetic process"/>
    <property type="evidence" value="ECO:0007669"/>
    <property type="project" value="UniProtKB-UniPathway"/>
</dbReference>
<dbReference type="CDD" id="cd02540">
    <property type="entry name" value="GT2_GlmU_N_bac"/>
    <property type="match status" value="1"/>
</dbReference>
<dbReference type="CDD" id="cd03353">
    <property type="entry name" value="LbH_GlmU_C"/>
    <property type="match status" value="1"/>
</dbReference>
<dbReference type="Gene3D" id="2.160.10.10">
    <property type="entry name" value="Hexapeptide repeat proteins"/>
    <property type="match status" value="1"/>
</dbReference>
<dbReference type="Gene3D" id="3.90.550.10">
    <property type="entry name" value="Spore Coat Polysaccharide Biosynthesis Protein SpsA, Chain A"/>
    <property type="match status" value="1"/>
</dbReference>
<dbReference type="HAMAP" id="MF_01631">
    <property type="entry name" value="GlmU"/>
    <property type="match status" value="1"/>
</dbReference>
<dbReference type="InterPro" id="IPR005882">
    <property type="entry name" value="Bifunctional_GlmU"/>
</dbReference>
<dbReference type="InterPro" id="IPR050065">
    <property type="entry name" value="GlmU-like"/>
</dbReference>
<dbReference type="InterPro" id="IPR038009">
    <property type="entry name" value="GlmU_C_LbH"/>
</dbReference>
<dbReference type="InterPro" id="IPR001451">
    <property type="entry name" value="Hexapep"/>
</dbReference>
<dbReference type="InterPro" id="IPR018357">
    <property type="entry name" value="Hexapep_transf_CS"/>
</dbReference>
<dbReference type="InterPro" id="IPR005835">
    <property type="entry name" value="NTP_transferase_dom"/>
</dbReference>
<dbReference type="InterPro" id="IPR029044">
    <property type="entry name" value="Nucleotide-diphossugar_trans"/>
</dbReference>
<dbReference type="InterPro" id="IPR011004">
    <property type="entry name" value="Trimer_LpxA-like_sf"/>
</dbReference>
<dbReference type="NCBIfam" id="TIGR01173">
    <property type="entry name" value="glmU"/>
    <property type="match status" value="1"/>
</dbReference>
<dbReference type="NCBIfam" id="NF010934">
    <property type="entry name" value="PRK14354.1"/>
    <property type="match status" value="1"/>
</dbReference>
<dbReference type="PANTHER" id="PTHR43584:SF3">
    <property type="entry name" value="BIFUNCTIONAL PROTEIN GLMU"/>
    <property type="match status" value="1"/>
</dbReference>
<dbReference type="PANTHER" id="PTHR43584">
    <property type="entry name" value="NUCLEOTIDYL TRANSFERASE"/>
    <property type="match status" value="1"/>
</dbReference>
<dbReference type="Pfam" id="PF00132">
    <property type="entry name" value="Hexapep"/>
    <property type="match status" value="1"/>
</dbReference>
<dbReference type="Pfam" id="PF00483">
    <property type="entry name" value="NTP_transferase"/>
    <property type="match status" value="1"/>
</dbReference>
<dbReference type="SUPFAM" id="SSF53448">
    <property type="entry name" value="Nucleotide-diphospho-sugar transferases"/>
    <property type="match status" value="1"/>
</dbReference>
<dbReference type="SUPFAM" id="SSF51161">
    <property type="entry name" value="Trimeric LpxA-like enzymes"/>
    <property type="match status" value="1"/>
</dbReference>
<dbReference type="PROSITE" id="PS00101">
    <property type="entry name" value="HEXAPEP_TRANSFERASES"/>
    <property type="match status" value="1"/>
</dbReference>
<accession>Q046K2</accession>
<comment type="function">
    <text evidence="1">Catalyzes the last two sequential reactions in the de novo biosynthetic pathway for UDP-N-acetylglucosamine (UDP-GlcNAc). The C-terminal domain catalyzes the transfer of acetyl group from acetyl coenzyme A to glucosamine-1-phosphate (GlcN-1-P) to produce N-acetylglucosamine-1-phosphate (GlcNAc-1-P), which is converted into UDP-GlcNAc by the transfer of uridine 5-monophosphate (from uridine 5-triphosphate), a reaction catalyzed by the N-terminal domain.</text>
</comment>
<comment type="catalytic activity">
    <reaction evidence="1">
        <text>alpha-D-glucosamine 1-phosphate + acetyl-CoA = N-acetyl-alpha-D-glucosamine 1-phosphate + CoA + H(+)</text>
        <dbReference type="Rhea" id="RHEA:13725"/>
        <dbReference type="ChEBI" id="CHEBI:15378"/>
        <dbReference type="ChEBI" id="CHEBI:57287"/>
        <dbReference type="ChEBI" id="CHEBI:57288"/>
        <dbReference type="ChEBI" id="CHEBI:57776"/>
        <dbReference type="ChEBI" id="CHEBI:58516"/>
        <dbReference type="EC" id="2.3.1.157"/>
    </reaction>
</comment>
<comment type="catalytic activity">
    <reaction evidence="1">
        <text>N-acetyl-alpha-D-glucosamine 1-phosphate + UTP + H(+) = UDP-N-acetyl-alpha-D-glucosamine + diphosphate</text>
        <dbReference type="Rhea" id="RHEA:13509"/>
        <dbReference type="ChEBI" id="CHEBI:15378"/>
        <dbReference type="ChEBI" id="CHEBI:33019"/>
        <dbReference type="ChEBI" id="CHEBI:46398"/>
        <dbReference type="ChEBI" id="CHEBI:57705"/>
        <dbReference type="ChEBI" id="CHEBI:57776"/>
        <dbReference type="EC" id="2.7.7.23"/>
    </reaction>
</comment>
<comment type="cofactor">
    <cofactor evidence="1">
        <name>Mg(2+)</name>
        <dbReference type="ChEBI" id="CHEBI:18420"/>
    </cofactor>
    <text evidence="1">Binds 1 Mg(2+) ion per subunit.</text>
</comment>
<comment type="pathway">
    <text evidence="1">Nucleotide-sugar biosynthesis; UDP-N-acetyl-alpha-D-glucosamine biosynthesis; N-acetyl-alpha-D-glucosamine 1-phosphate from alpha-D-glucosamine 6-phosphate (route II): step 2/2.</text>
</comment>
<comment type="pathway">
    <text evidence="1">Nucleotide-sugar biosynthesis; UDP-N-acetyl-alpha-D-glucosamine biosynthesis; UDP-N-acetyl-alpha-D-glucosamine from N-acetyl-alpha-D-glucosamine 1-phosphate: step 1/1.</text>
</comment>
<comment type="pathway">
    <text evidence="1">Bacterial outer membrane biogenesis; LPS lipid A biosynthesis.</text>
</comment>
<comment type="subunit">
    <text evidence="1">Homotrimer.</text>
</comment>
<comment type="subcellular location">
    <subcellularLocation>
        <location evidence="1">Cytoplasm</location>
    </subcellularLocation>
</comment>
<comment type="similarity">
    <text evidence="1">In the N-terminal section; belongs to the N-acetylglucosamine-1-phosphate uridyltransferase family.</text>
</comment>
<comment type="similarity">
    <text evidence="1">In the C-terminal section; belongs to the transferase hexapeptide repeat family.</text>
</comment>
<organism>
    <name type="scientific">Lactobacillus gasseri (strain ATCC 33323 / DSM 20243 / BCRC 14619 / CIP 102991 / JCM 1131 / KCTC 3163 / NCIMB 11718 / NCTC 13722 / AM63)</name>
    <dbReference type="NCBI Taxonomy" id="324831"/>
    <lineage>
        <taxon>Bacteria</taxon>
        <taxon>Bacillati</taxon>
        <taxon>Bacillota</taxon>
        <taxon>Bacilli</taxon>
        <taxon>Lactobacillales</taxon>
        <taxon>Lactobacillaceae</taxon>
        <taxon>Lactobacillus</taxon>
    </lineage>
</organism>